<reference key="1">
    <citation type="journal article" date="1997" name="Cell">
        <title>The Arabidopsis NPR1 gene that controls systemic acquired resistance encodes a novel protein containing ankyrin repeats.</title>
        <authorList>
            <person name="Cao H."/>
            <person name="Glazebrook J."/>
            <person name="Clarke J.D."/>
            <person name="Volko S."/>
            <person name="Dong X."/>
        </authorList>
    </citation>
    <scope>NUCLEOTIDE SEQUENCE [MRNA]</scope>
    <scope>FUNCTION</scope>
    <scope>MUTAGENESIS OF CYS-150 AND HIS-334</scope>
    <source>
        <strain>cv. Columbia</strain>
    </source>
</reference>
<reference key="2">
    <citation type="journal article" date="1997" name="Plant Cell">
        <title>The Arabidopsis NIM1 protein shows homology to the mammalian transcription factor inhibitor I kappa B.</title>
        <authorList>
            <person name="Ryals J."/>
            <person name="Weymann K."/>
            <person name="Lawton K."/>
            <person name="Friedrich L."/>
            <person name="Ellis D."/>
            <person name="Steiner H.-Y."/>
            <person name="Johnson J."/>
            <person name="Delaney T.P."/>
            <person name="Jesse T."/>
            <person name="Vos P."/>
            <person name="Uknes S."/>
        </authorList>
    </citation>
    <scope>NUCLEOTIDE SEQUENCE [GENOMIC DNA]</scope>
    <scope>VARIANTS ASN-93; THR-96; ALA-108 DEL; TRP-268 AND PRO-406</scope>
    <scope>MUTAGENESIS OF HIS-300 AND ARG-432</scope>
    <source>
        <strain>cv. Columbia</strain>
        <strain>cv. Wassilewskija</strain>
    </source>
</reference>
<reference key="3">
    <citation type="journal article" date="2000" name="Nature">
        <title>Sequence and analysis of chromosome 1 of the plant Arabidopsis thaliana.</title>
        <authorList>
            <person name="Theologis A."/>
            <person name="Ecker J.R."/>
            <person name="Palm C.J."/>
            <person name="Federspiel N.A."/>
            <person name="Kaul S."/>
            <person name="White O."/>
            <person name="Alonso J."/>
            <person name="Altafi H."/>
            <person name="Araujo R."/>
            <person name="Bowman C.L."/>
            <person name="Brooks S.Y."/>
            <person name="Buehler E."/>
            <person name="Chan A."/>
            <person name="Chao Q."/>
            <person name="Chen H."/>
            <person name="Cheuk R.F."/>
            <person name="Chin C.W."/>
            <person name="Chung M.K."/>
            <person name="Conn L."/>
            <person name="Conway A.B."/>
            <person name="Conway A.R."/>
            <person name="Creasy T.H."/>
            <person name="Dewar K."/>
            <person name="Dunn P."/>
            <person name="Etgu P."/>
            <person name="Feldblyum T.V."/>
            <person name="Feng J.-D."/>
            <person name="Fong B."/>
            <person name="Fujii C.Y."/>
            <person name="Gill J.E."/>
            <person name="Goldsmith A.D."/>
            <person name="Haas B."/>
            <person name="Hansen N.F."/>
            <person name="Hughes B."/>
            <person name="Huizar L."/>
            <person name="Hunter J.L."/>
            <person name="Jenkins J."/>
            <person name="Johnson-Hopson C."/>
            <person name="Khan S."/>
            <person name="Khaykin E."/>
            <person name="Kim C.J."/>
            <person name="Koo H.L."/>
            <person name="Kremenetskaia I."/>
            <person name="Kurtz D.B."/>
            <person name="Kwan A."/>
            <person name="Lam B."/>
            <person name="Langin-Hooper S."/>
            <person name="Lee A."/>
            <person name="Lee J.M."/>
            <person name="Lenz C.A."/>
            <person name="Li J.H."/>
            <person name="Li Y.-P."/>
            <person name="Lin X."/>
            <person name="Liu S.X."/>
            <person name="Liu Z.A."/>
            <person name="Luros J.S."/>
            <person name="Maiti R."/>
            <person name="Marziali A."/>
            <person name="Militscher J."/>
            <person name="Miranda M."/>
            <person name="Nguyen M."/>
            <person name="Nierman W.C."/>
            <person name="Osborne B.I."/>
            <person name="Pai G."/>
            <person name="Peterson J."/>
            <person name="Pham P.K."/>
            <person name="Rizzo M."/>
            <person name="Rooney T."/>
            <person name="Rowley D."/>
            <person name="Sakano H."/>
            <person name="Salzberg S.L."/>
            <person name="Schwartz J.R."/>
            <person name="Shinn P."/>
            <person name="Southwick A.M."/>
            <person name="Sun H."/>
            <person name="Tallon L.J."/>
            <person name="Tambunga G."/>
            <person name="Toriumi M.J."/>
            <person name="Town C.D."/>
            <person name="Utterback T."/>
            <person name="Van Aken S."/>
            <person name="Vaysberg M."/>
            <person name="Vysotskaia V.S."/>
            <person name="Walker M."/>
            <person name="Wu D."/>
            <person name="Yu G."/>
            <person name="Fraser C.M."/>
            <person name="Venter J.C."/>
            <person name="Davis R.W."/>
        </authorList>
    </citation>
    <scope>NUCLEOTIDE SEQUENCE [LARGE SCALE GENOMIC DNA]</scope>
    <source>
        <strain>cv. Columbia</strain>
    </source>
</reference>
<reference key="4">
    <citation type="journal article" date="2017" name="Plant J.">
        <title>Araport11: a complete reannotation of the Arabidopsis thaliana reference genome.</title>
        <authorList>
            <person name="Cheng C.Y."/>
            <person name="Krishnakumar V."/>
            <person name="Chan A.P."/>
            <person name="Thibaud-Nissen F."/>
            <person name="Schobel S."/>
            <person name="Town C.D."/>
        </authorList>
    </citation>
    <scope>GENOME REANNOTATION</scope>
    <source>
        <strain>cv. Columbia</strain>
    </source>
</reference>
<reference key="5">
    <citation type="journal article" date="2003" name="Science">
        <title>Empirical analysis of transcriptional activity in the Arabidopsis genome.</title>
        <authorList>
            <person name="Yamada K."/>
            <person name="Lim J."/>
            <person name="Dale J.M."/>
            <person name="Chen H."/>
            <person name="Shinn P."/>
            <person name="Palm C.J."/>
            <person name="Southwick A.M."/>
            <person name="Wu H.C."/>
            <person name="Kim C.J."/>
            <person name="Nguyen M."/>
            <person name="Pham P.K."/>
            <person name="Cheuk R.F."/>
            <person name="Karlin-Newmann G."/>
            <person name="Liu S.X."/>
            <person name="Lam B."/>
            <person name="Sakano H."/>
            <person name="Wu T."/>
            <person name="Yu G."/>
            <person name="Miranda M."/>
            <person name="Quach H.L."/>
            <person name="Tripp M."/>
            <person name="Chang C.H."/>
            <person name="Lee J.M."/>
            <person name="Toriumi M.J."/>
            <person name="Chan M.M."/>
            <person name="Tang C.C."/>
            <person name="Onodera C.S."/>
            <person name="Deng J.M."/>
            <person name="Akiyama K."/>
            <person name="Ansari Y."/>
            <person name="Arakawa T."/>
            <person name="Banh J."/>
            <person name="Banno F."/>
            <person name="Bowser L."/>
            <person name="Brooks S.Y."/>
            <person name="Carninci P."/>
            <person name="Chao Q."/>
            <person name="Choy N."/>
            <person name="Enju A."/>
            <person name="Goldsmith A.D."/>
            <person name="Gurjal M."/>
            <person name="Hansen N.F."/>
            <person name="Hayashizaki Y."/>
            <person name="Johnson-Hopson C."/>
            <person name="Hsuan V.W."/>
            <person name="Iida K."/>
            <person name="Karnes M."/>
            <person name="Khan S."/>
            <person name="Koesema E."/>
            <person name="Ishida J."/>
            <person name="Jiang P.X."/>
            <person name="Jones T."/>
            <person name="Kawai J."/>
            <person name="Kamiya A."/>
            <person name="Meyers C."/>
            <person name="Nakajima M."/>
            <person name="Narusaka M."/>
            <person name="Seki M."/>
            <person name="Sakurai T."/>
            <person name="Satou M."/>
            <person name="Tamse R."/>
            <person name="Vaysberg M."/>
            <person name="Wallender E.K."/>
            <person name="Wong C."/>
            <person name="Yamamura Y."/>
            <person name="Yuan S."/>
            <person name="Shinozaki K."/>
            <person name="Davis R.W."/>
            <person name="Theologis A."/>
            <person name="Ecker J.R."/>
        </authorList>
    </citation>
    <scope>NUCLEOTIDE SEQUENCE [LARGE SCALE MRNA]</scope>
    <source>
        <strain>cv. Columbia</strain>
    </source>
</reference>
<reference key="6">
    <citation type="journal article" date="1995" name="Proc. Natl. Acad. Sci. U.S.A.">
        <title>Arabidopsis signal transduction mutant defective in chemically and biologically induced disease resistance.</title>
        <authorList>
            <person name="Delaney T.P."/>
            <person name="Friedrich L."/>
            <person name="Ryals J.A."/>
        </authorList>
    </citation>
    <scope>FUNCTION</scope>
</reference>
<reference key="7">
    <citation type="journal article" date="1997" name="Mol. Plant Microbe Interact.">
        <title>Characterization of a salicylic acid-insensitive mutant (sai1) of Arabidopsis thaliana, identified in a selective screen utilizing the SA-inducible expression of the tms2 gene.</title>
        <authorList>
            <person name="Shah J."/>
            <person name="Tsui F."/>
            <person name="Klessig D.F."/>
        </authorList>
    </citation>
    <scope>FUNCTION</scope>
</reference>
<reference key="8">
    <citation type="journal article" date="2000" name="Mol. Plant Microbe Interact.">
        <title>NPR1 differentially interacts with members of the TGA/OBF family of transcription factors that bind an element of the PR-1 gene required for induction by salicylic acid.</title>
        <authorList>
            <person name="Zhou J.-M."/>
            <person name="Trifa Y."/>
            <person name="Silva H."/>
            <person name="Pontier D."/>
            <person name="Lam E."/>
            <person name="Shah J."/>
            <person name="Klessig D.F."/>
        </authorList>
    </citation>
    <scope>INTERACTION WITH TGA FACTORS</scope>
</reference>
<reference key="9">
    <citation type="journal article" date="2000" name="Plant Cell">
        <title>The Arabidopsis NPR1/NIM1 protein enhances the DNA binding activity of a subgroup of the TGA family of bZIP transcription factors.</title>
        <authorList>
            <person name="Despres C."/>
            <person name="DeLong C."/>
            <person name="Glaze S."/>
            <person name="Liu E."/>
            <person name="Fobert P.R."/>
        </authorList>
    </citation>
    <scope>SUBCELLULAR LOCATION</scope>
    <scope>INTERACTION WITH TGA FACTORS</scope>
</reference>
<reference key="10">
    <citation type="journal article" date="2000" name="Plant Cell">
        <title>Nuclear localization of NPR1 is required for activation of PR gene expression.</title>
        <authorList>
            <person name="Kinkema M."/>
            <person name="Fan W."/>
            <person name="Dong X."/>
        </authorList>
    </citation>
    <scope>SUBCELLULAR LOCATION</scope>
</reference>
<reference key="11">
    <citation type="journal article" date="2001" name="Plant Mol. Biol.">
        <title>NIMIN-1, NIMIN-2 and NIMIN-3, members of a novel family of proteins from Arabidopsis that interact with NPR1/NIM1, a key regulator of systemic acquired resistance in plants.</title>
        <authorList>
            <person name="Weigel R.R."/>
            <person name="Baeuscher C."/>
            <person name="Pfitzner A.J.P."/>
            <person name="Pfitzner U.M."/>
        </authorList>
    </citation>
    <scope>INTERACTION WITH NIMIN-1; NIMIN-2 AND NIMIN-3</scope>
</reference>
<reference key="12">
    <citation type="journal article" date="2003" name="Cell">
        <title>Inducers of plant systemic acquired resistance regulate NPR1 function through redox changes.</title>
        <authorList>
            <person name="Mou Z."/>
            <person name="Fan W."/>
            <person name="Dong X."/>
        </authorList>
    </citation>
    <scope>FUNCTION</scope>
    <scope>SUBUNIT</scope>
    <scope>SUBCELLULAR LOCATION</scope>
    <scope>MUTAGENESIS OF CYS-82 AND CYS-216</scope>
</reference>
<reference key="13">
    <citation type="journal article" date="2003" name="Plant Cell">
        <title>NPR1 modulates cross-talk between salicylate- and jasmonate-dependent defense pathways through a novel function in the cytosol.</title>
        <authorList>
            <person name="Spoel S.H."/>
            <person name="Koornneef A."/>
            <person name="Claessens S.M."/>
            <person name="Korzelius J.P."/>
            <person name="Van Pelt J.A."/>
            <person name="Mueller M.J."/>
            <person name="Buchala A.J."/>
            <person name="Metraux J.P."/>
            <person name="Brown R."/>
            <person name="Kazan K."/>
            <person name="Van Loon L.C."/>
            <person name="Dong X."/>
            <person name="Pieterse C.M."/>
        </authorList>
    </citation>
    <scope>FUNCTION</scope>
</reference>
<reference key="14">
    <citation type="journal article" date="2003" name="Plant Cell">
        <title>Salicylic acid and NPR1 induce the recruitment of trans-activating TGA factors to a defense gene promoter in Arabidopsis.</title>
        <authorList>
            <person name="Johnson C."/>
            <person name="Boden E."/>
            <person name="Arias J."/>
        </authorList>
    </citation>
    <scope>FUNCTION</scope>
</reference>
<reference key="15">
    <citation type="journal article" date="2003" name="Plant Cell">
        <title>The Arabidopsis NPR1 disease resistance protein is a novel cofactor that confers redox regulation of DNA binding activity to the basic domain/leucine zipper transcription factor TGA1.</title>
        <authorList>
            <person name="Despres C."/>
            <person name="Chubak C."/>
            <person name="Rochon A."/>
            <person name="Clark R."/>
            <person name="Bethune T."/>
            <person name="Desveaux D."/>
            <person name="Fobert P.R."/>
        </authorList>
    </citation>
    <scope>FUNCTION</scope>
    <scope>INTERACTION WITH TGA1 AND TGA4</scope>
</reference>
<reference key="16">
    <citation type="journal article" date="2005" name="J. Biol. Chem.">
        <title>Cullins 3a and 3b assemble with members of the broad complex/tramtrack/bric-a-brac (BTB) protein family to form essential ubiquitin-protein ligases (E3s) in Arabidopsis.</title>
        <authorList>
            <person name="Gingerich D.J."/>
            <person name="Gagne J.M."/>
            <person name="Salter D.W."/>
            <person name="Hellmann H."/>
            <person name="Estelle M."/>
            <person name="Ma L."/>
            <person name="Vierstra R.D."/>
        </authorList>
    </citation>
    <scope>DOMAIN BTB</scope>
</reference>
<reference key="17">
    <citation type="journal article" date="2008" name="Science">
        <title>Plant immunity requires conformational changes of NPR1 via S-nitrosylation and thioredoxins.</title>
        <authorList>
            <person name="Tada Y."/>
            <person name="Spoel S.H."/>
            <person name="Pajerowska-Mukhtar K."/>
            <person name="Mou Z."/>
            <person name="Song J."/>
            <person name="Wang C."/>
            <person name="Zuo J."/>
            <person name="Dong X."/>
        </authorList>
    </citation>
    <scope>S-NITROSYLATION AT CYS-156</scope>
</reference>
<reference key="18">
    <citation type="journal article" date="2009" name="Cell">
        <title>Proteasome-mediated turnover of the transcription coactivator NPR1 plays dual roles in regulating plant immunity.</title>
        <authorList>
            <person name="Spoel S.H."/>
            <person name="Mou Z."/>
            <person name="Tada Y."/>
            <person name="Spivey N.W."/>
            <person name="Genschik P."/>
            <person name="Dong X."/>
        </authorList>
    </citation>
    <scope>PHOSPHORYLATION AT SER-11 AND SER-15</scope>
    <scope>MUTAGENESIS OF SER-11 AND SER-15</scope>
    <scope>UBIQUITINATION</scope>
    <scope>PROTEASOMAL DEGRADATION</scope>
</reference>
<reference key="19">
    <citation type="journal article" date="2012" name="Nature">
        <title>NPR3 and NPR4 are receptors for the immune signal salicylic acid in plants.</title>
        <authorList>
            <person name="Fu Z.Q."/>
            <person name="Yan S."/>
            <person name="Saleh A."/>
            <person name="Wang W."/>
            <person name="Ruble J."/>
            <person name="Oka N."/>
            <person name="Mohan R."/>
            <person name="Spoel S.H."/>
            <person name="Tada Y."/>
            <person name="Zheng N."/>
            <person name="Dong X."/>
        </authorList>
    </citation>
    <scope>FUNCTION</scope>
    <scope>MUTAGENESIS OF CYS-82</scope>
    <scope>INTERACTION WITH CUL3A; NPR2; NPR3 AND NPR4</scope>
    <scope>INDUCTION BY PSEUDOMONAS SYRINGAE</scope>
    <source>
        <strain>cv. Columbia</strain>
    </source>
</reference>
<reference key="20">
    <citation type="journal article" date="2015" name="Cell Host Microbe">
        <title>Posttranslational modifications of the master transcriptional regulator NPR1 enable dynamic but tight control of plant immune responses.</title>
        <authorList>
            <person name="Saleh A."/>
            <person name="Withers J."/>
            <person name="Mohan R."/>
            <person name="Marques J."/>
            <person name="Gu Y."/>
            <person name="Yan S."/>
            <person name="Zavaliev R."/>
            <person name="Nomoto M."/>
            <person name="Tada Y."/>
            <person name="Dong X."/>
        </authorList>
    </citation>
    <scope>FUNCTION</scope>
    <scope>SUMOYLATION</scope>
    <scope>PHOSPHORYLATION AT SER-55 AND SER-59</scope>
    <scope>MUTAGENESIS OF SER-11; SER-15; SER-55; SER-59 AND LEU-346</scope>
    <scope>INTERACTION WITH NIMIN-1; NIMIN-2; NIMIN-3; TGA3; WRKY70; SUMO3; NPR3 AND NPR4</scope>
    <source>
        <strain>cv. Columbia</strain>
    </source>
</reference>
<reference key="21">
    <citation type="journal article" date="2020" name="Nature">
        <title>Structural basis of salicylic acid perception by Arabidopsis NPR proteins.</title>
        <authorList>
            <person name="Wang W."/>
            <person name="Withers J."/>
            <person name="Li H."/>
            <person name="Zwack P.J."/>
            <person name="Rusnac D.V."/>
            <person name="Shi H."/>
            <person name="Liu L."/>
            <person name="Yan S."/>
            <person name="Hinds T.R."/>
            <person name="Guttman M."/>
            <person name="Dong X."/>
            <person name="Zheng N."/>
        </authorList>
    </citation>
    <scope>INTERACTION WITH NPR4</scope>
    <scope>SALICYLATE BINDING</scope>
    <source>
        <strain>cv. Columbia</strain>
    </source>
</reference>
<reference evidence="32 33 34 35" key="22">
    <citation type="journal article" date="2022" name="Nature">
        <title>Structural basis of NPR1 in activating plant immunity.</title>
        <authorList>
            <person name="Kumar S."/>
            <person name="Zavaliev R."/>
            <person name="Wu Q."/>
            <person name="Zhou Y."/>
            <person name="Cheng J."/>
            <person name="Dillard L."/>
            <person name="Powers J."/>
            <person name="Withers J."/>
            <person name="Zhao J."/>
            <person name="Guan Z."/>
            <person name="Borgnia M.J."/>
            <person name="Bartesaghi A."/>
            <person name="Dong X."/>
            <person name="Zhou P."/>
        </authorList>
    </citation>
    <scope>X-RAY CRYSTALLOGRAPHY (3.06 ANGSTROMS) OF 39-410 IN COMPLEX WITH ZINC AND TGA3 IN THE PRESENCE OF DNA</scope>
    <scope>FUNCTION</scope>
    <scope>MUTAGENESIS OF LEU-49; PHE-53; VAL-56; CYS-82; VAL-83; CYS-150; 151-ALA-ASP-152; CYS-155; CYS-156; HIS-157; CYS-160; LEU-281; LEU-284; HIS-334; LEU-346; LEU-393 AND ILE-397</scope>
    <scope>ZINC FINGER</scope>
    <scope>SUBUNIT</scope>
    <scope>INTERACTION WITH CUL3A AND TGA3</scope>
</reference>
<protein>
    <recommendedName>
        <fullName evidence="27">Regulatory protein NPR1</fullName>
    </recommendedName>
    <alternativeName>
        <fullName evidence="27">BTB/POZ domain-containing protein NPR1</fullName>
    </alternativeName>
    <alternativeName>
        <fullName evidence="28">Non-inducible immunity protein 1</fullName>
        <shortName evidence="28">Nim1</shortName>
    </alternativeName>
    <alternativeName>
        <fullName evidence="27">Nonexpresser of PR genes 1</fullName>
    </alternativeName>
    <alternativeName>
        <fullName evidence="26">Salicylic acid insensitive 1</fullName>
        <shortName evidence="26">Sai1</shortName>
    </alternativeName>
</protein>
<sequence length="593" mass="66032">MDTTIDGFADSYEISSTSFVATDNTDSSIVYLAAEQVLTGPDVSALQLLSNSFESVFDSPDDFYSDAKLVLSDGREVSFHRCVLSARSSFFKSALAAAKKEKDSNNTAAVKLELKEIAKDYEVGFDSVVTVLAYVYSSRVRPPPKGVSECADENCCHVACRPAVDFMLEVLYLAFIFKIPELITLYQRHLLDVVDKVVIEDTLVILKLANICGKACMKLLDRCKEIIVKSNVDMVSLEKSLPEELVKEIIDRRKELGLEVPKVKKHVSNVHKALDSDDIELVKLLLKEDHTNLDDACALHFAVAYCNVKTATDLLKLDLADVNHRNPRGYTVLHVAAMRKEPQLILSLLEKGASASEATLEGRTALMIAKQATMAVECNNIPEQCKHSLKGRLCVEILEQEDKREQIPRDVPPSFAVAADELKMTLLDLENRVALAQRLFPTEAQAAMEIAEMKGTCEFIVTSLEPDRLTGTKRTSPGVKIAPFRILEEHQSRLKALSKTVELGKRFFPRCSAVLDQIMNCEDLTQLACGEDDTAEKRLQKKQRYMEIQETLKKAFSEDNLELGNSSLTDSTSSTSKSTGGKRSNRKLSHRRR</sequence>
<proteinExistence type="evidence at protein level"/>
<dbReference type="EMBL" id="U76707">
    <property type="protein sequence ID" value="AAC49611.1"/>
    <property type="molecule type" value="mRNA"/>
</dbReference>
<dbReference type="EMBL" id="U87794">
    <property type="protein sequence ID" value="AAB58262.1"/>
    <property type="molecule type" value="Genomic_DNA"/>
</dbReference>
<dbReference type="EMBL" id="AC066689">
    <property type="protein sequence ID" value="AAG51705.1"/>
    <property type="molecule type" value="Genomic_DNA"/>
</dbReference>
<dbReference type="EMBL" id="CP002684">
    <property type="protein sequence ID" value="AEE34220.1"/>
    <property type="molecule type" value="Genomic_DNA"/>
</dbReference>
<dbReference type="EMBL" id="AY050455">
    <property type="protein sequence ID" value="AAK91469.1"/>
    <property type="molecule type" value="mRNA"/>
</dbReference>
<dbReference type="EMBL" id="AY093992">
    <property type="protein sequence ID" value="AAM16253.1"/>
    <property type="molecule type" value="mRNA"/>
</dbReference>
<dbReference type="PIR" id="F96666">
    <property type="entry name" value="F96666"/>
</dbReference>
<dbReference type="RefSeq" id="NP_176610.1">
    <property type="nucleotide sequence ID" value="NM_105102.3"/>
</dbReference>
<dbReference type="PDB" id="7MK2">
    <property type="method" value="EM"/>
    <property type="resolution" value="3.80 A"/>
    <property type="chains" value="A/B=1-593"/>
</dbReference>
<dbReference type="PDB" id="7MK3">
    <property type="method" value="X-ray"/>
    <property type="resolution" value="3.06 A"/>
    <property type="chains" value="A/B=39-410"/>
</dbReference>
<dbReference type="PDB" id="7TAC">
    <property type="method" value="EM"/>
    <property type="resolution" value="3.60 A"/>
    <property type="chains" value="A/B=1-593"/>
</dbReference>
<dbReference type="PDB" id="7TAD">
    <property type="method" value="EM"/>
    <property type="resolution" value="3.60 A"/>
    <property type="chains" value="A/B=1-593"/>
</dbReference>
<dbReference type="PDBsum" id="7MK2"/>
<dbReference type="PDBsum" id="7MK3"/>
<dbReference type="PDBsum" id="7TAC"/>
<dbReference type="PDBsum" id="7TAD"/>
<dbReference type="EMDB" id="EMD-23884"/>
<dbReference type="EMDB" id="EMD-25769"/>
<dbReference type="EMDB" id="EMD-25771"/>
<dbReference type="SMR" id="P93002"/>
<dbReference type="BioGRID" id="27954">
    <property type="interactions" value="16"/>
</dbReference>
<dbReference type="ComplexPortal" id="CPX-3572">
    <property type="entry name" value="TGA2-NPR1 complex"/>
</dbReference>
<dbReference type="DIP" id="DIP-38585N"/>
<dbReference type="FunCoup" id="P93002">
    <property type="interactions" value="695"/>
</dbReference>
<dbReference type="IntAct" id="P93002">
    <property type="interactions" value="21"/>
</dbReference>
<dbReference type="STRING" id="3702.P93002"/>
<dbReference type="iPTMnet" id="P93002"/>
<dbReference type="PaxDb" id="3702-AT1G64280.1"/>
<dbReference type="ProteomicsDB" id="249048"/>
<dbReference type="EnsemblPlants" id="AT1G64280.1">
    <property type="protein sequence ID" value="AT1G64280.1"/>
    <property type="gene ID" value="AT1G64280"/>
</dbReference>
<dbReference type="GeneID" id="842733"/>
<dbReference type="Gramene" id="AT1G64280.1">
    <property type="protein sequence ID" value="AT1G64280.1"/>
    <property type="gene ID" value="AT1G64280"/>
</dbReference>
<dbReference type="KEGG" id="ath:AT1G64280"/>
<dbReference type="Araport" id="AT1G64280"/>
<dbReference type="TAIR" id="AT1G64280">
    <property type="gene designation" value="NPR1"/>
</dbReference>
<dbReference type="eggNOG" id="KOG0504">
    <property type="taxonomic scope" value="Eukaryota"/>
</dbReference>
<dbReference type="HOGENOM" id="CLU_034895_1_0_1"/>
<dbReference type="InParanoid" id="P93002"/>
<dbReference type="OMA" id="ENCCHVA"/>
<dbReference type="PhylomeDB" id="P93002"/>
<dbReference type="UniPathway" id="UPA00143"/>
<dbReference type="PRO" id="PR:P93002"/>
<dbReference type="Proteomes" id="UP000006548">
    <property type="component" value="Chromosome 1"/>
</dbReference>
<dbReference type="ExpressionAtlas" id="P93002">
    <property type="expression patterns" value="baseline and differential"/>
</dbReference>
<dbReference type="GO" id="GO:0005737">
    <property type="term" value="C:cytoplasm"/>
    <property type="evidence" value="ECO:0000314"/>
    <property type="project" value="UniProtKB"/>
</dbReference>
<dbReference type="GO" id="GO:0016604">
    <property type="term" value="C:nuclear body"/>
    <property type="evidence" value="ECO:0000314"/>
    <property type="project" value="UniProtKB"/>
</dbReference>
<dbReference type="GO" id="GO:0005634">
    <property type="term" value="C:nucleus"/>
    <property type="evidence" value="ECO:0000314"/>
    <property type="project" value="UniProtKB"/>
</dbReference>
<dbReference type="GO" id="GO:0090575">
    <property type="term" value="C:RNA polymerase II transcription regulator complex"/>
    <property type="evidence" value="ECO:0000353"/>
    <property type="project" value="ComplexPortal"/>
</dbReference>
<dbReference type="GO" id="GO:1901149">
    <property type="term" value="F:salicylic acid binding"/>
    <property type="evidence" value="ECO:0000314"/>
    <property type="project" value="UniProtKB"/>
</dbReference>
<dbReference type="GO" id="GO:0003712">
    <property type="term" value="F:transcription coregulator activity"/>
    <property type="evidence" value="ECO:0000314"/>
    <property type="project" value="UniProtKB"/>
</dbReference>
<dbReference type="GO" id="GO:0008270">
    <property type="term" value="F:zinc ion binding"/>
    <property type="evidence" value="ECO:0007669"/>
    <property type="project" value="UniProtKB-KW"/>
</dbReference>
<dbReference type="GO" id="GO:0042742">
    <property type="term" value="P:defense response to bacterium"/>
    <property type="evidence" value="ECO:0000315"/>
    <property type="project" value="UniProtKB"/>
</dbReference>
<dbReference type="GO" id="GO:0050832">
    <property type="term" value="P:defense response to fungus"/>
    <property type="evidence" value="ECO:0000315"/>
    <property type="project" value="TAIR"/>
</dbReference>
<dbReference type="GO" id="GO:0106167">
    <property type="term" value="P:extracellular ATP signaling"/>
    <property type="evidence" value="ECO:0000315"/>
    <property type="project" value="TAIR"/>
</dbReference>
<dbReference type="GO" id="GO:0009682">
    <property type="term" value="P:induced systemic resistance"/>
    <property type="evidence" value="ECO:0000315"/>
    <property type="project" value="TAIR"/>
</dbReference>
<dbReference type="GO" id="GO:0031348">
    <property type="term" value="P:negative regulation of defense response"/>
    <property type="evidence" value="ECO:0000315"/>
    <property type="project" value="TAIR"/>
</dbReference>
<dbReference type="GO" id="GO:0009626">
    <property type="term" value="P:plant-type hypersensitive response"/>
    <property type="evidence" value="ECO:0007669"/>
    <property type="project" value="UniProtKB-KW"/>
</dbReference>
<dbReference type="GO" id="GO:0045893">
    <property type="term" value="P:positive regulation of DNA-templated transcription"/>
    <property type="evidence" value="ECO:0000314"/>
    <property type="project" value="ComplexPortal"/>
</dbReference>
<dbReference type="GO" id="GO:0016567">
    <property type="term" value="P:protein ubiquitination"/>
    <property type="evidence" value="ECO:0007669"/>
    <property type="project" value="UniProtKB-UniPathway"/>
</dbReference>
<dbReference type="GO" id="GO:1900424">
    <property type="term" value="P:regulation of defense response to bacterium"/>
    <property type="evidence" value="ECO:0000315"/>
    <property type="project" value="UniProtKB"/>
</dbReference>
<dbReference type="GO" id="GO:2000022">
    <property type="term" value="P:regulation of jasmonic acid mediated signaling pathway"/>
    <property type="evidence" value="ECO:0000315"/>
    <property type="project" value="UniProtKB"/>
</dbReference>
<dbReference type="GO" id="GO:2000031">
    <property type="term" value="P:regulation of salicylic acid mediated signaling pathway"/>
    <property type="evidence" value="ECO:0000315"/>
    <property type="project" value="UniProtKB"/>
</dbReference>
<dbReference type="GO" id="GO:0010112">
    <property type="term" value="P:regulation of systemic acquired resistance"/>
    <property type="evidence" value="ECO:0000315"/>
    <property type="project" value="UniProtKB"/>
</dbReference>
<dbReference type="GO" id="GO:0009617">
    <property type="term" value="P:response to bacterium"/>
    <property type="evidence" value="ECO:0000315"/>
    <property type="project" value="TAIR"/>
</dbReference>
<dbReference type="GO" id="GO:0009408">
    <property type="term" value="P:response to heat"/>
    <property type="evidence" value="ECO:0000315"/>
    <property type="project" value="TAIR"/>
</dbReference>
<dbReference type="GO" id="GO:0080027">
    <property type="term" value="P:response to herbivore"/>
    <property type="evidence" value="ECO:0007669"/>
    <property type="project" value="EnsemblPlants"/>
</dbReference>
<dbReference type="GO" id="GO:0001666">
    <property type="term" value="P:response to hypoxia"/>
    <property type="evidence" value="ECO:0000315"/>
    <property type="project" value="TAIR"/>
</dbReference>
<dbReference type="GO" id="GO:0009625">
    <property type="term" value="P:response to insect"/>
    <property type="evidence" value="ECO:0000315"/>
    <property type="project" value="TAIR"/>
</dbReference>
<dbReference type="GO" id="GO:0009751">
    <property type="term" value="P:response to salicylic acid"/>
    <property type="evidence" value="ECO:0000314"/>
    <property type="project" value="UniProtKB"/>
</dbReference>
<dbReference type="GO" id="GO:0009611">
    <property type="term" value="P:response to wounding"/>
    <property type="evidence" value="ECO:0000315"/>
    <property type="project" value="TAIR"/>
</dbReference>
<dbReference type="GO" id="GO:0009627">
    <property type="term" value="P:systemic acquired resistance"/>
    <property type="evidence" value="ECO:0000270"/>
    <property type="project" value="TAIR"/>
</dbReference>
<dbReference type="GO" id="GO:0009862">
    <property type="term" value="P:systemic acquired resistance, salicylic acid mediated signaling pathway"/>
    <property type="evidence" value="ECO:0000314"/>
    <property type="project" value="ComplexPortal"/>
</dbReference>
<dbReference type="CDD" id="cd18310">
    <property type="entry name" value="BTB_POZ_NPR_plant"/>
    <property type="match status" value="1"/>
</dbReference>
<dbReference type="FunFam" id="1.25.40.20:FF:000239">
    <property type="entry name" value="BTB/POZ domain and ankyrin repeat-containing protein NPR1"/>
    <property type="match status" value="1"/>
</dbReference>
<dbReference type="FunFam" id="3.30.710.10:FF:000192">
    <property type="entry name" value="Non-expressor of PR1"/>
    <property type="match status" value="1"/>
</dbReference>
<dbReference type="Gene3D" id="1.25.40.20">
    <property type="entry name" value="Ankyrin repeat-containing domain"/>
    <property type="match status" value="1"/>
</dbReference>
<dbReference type="Gene3D" id="3.30.710.10">
    <property type="entry name" value="Potassium Channel Kv1.1, Chain A"/>
    <property type="match status" value="1"/>
</dbReference>
<dbReference type="InterPro" id="IPR002110">
    <property type="entry name" value="Ankyrin_rpt"/>
</dbReference>
<dbReference type="InterPro" id="IPR036770">
    <property type="entry name" value="Ankyrin_rpt-contain_sf"/>
</dbReference>
<dbReference type="InterPro" id="IPR000210">
    <property type="entry name" value="BTB/POZ_dom"/>
</dbReference>
<dbReference type="InterPro" id="IPR044292">
    <property type="entry name" value="NPR"/>
</dbReference>
<dbReference type="InterPro" id="IPR021094">
    <property type="entry name" value="NPR1/NIM1-like_C"/>
</dbReference>
<dbReference type="InterPro" id="IPR024228">
    <property type="entry name" value="NPR_central_dom"/>
</dbReference>
<dbReference type="InterPro" id="IPR011333">
    <property type="entry name" value="SKP1/BTB/POZ_sf"/>
</dbReference>
<dbReference type="PANTHER" id="PTHR46475:SF11">
    <property type="entry name" value="REGULATORY PROTEIN NPR1"/>
    <property type="match status" value="1"/>
</dbReference>
<dbReference type="PANTHER" id="PTHR46475">
    <property type="entry name" value="REGULATORY PROTEIN NPR3"/>
    <property type="match status" value="1"/>
</dbReference>
<dbReference type="Pfam" id="PF12796">
    <property type="entry name" value="Ank_2"/>
    <property type="match status" value="1"/>
</dbReference>
<dbReference type="Pfam" id="PF00651">
    <property type="entry name" value="BTB"/>
    <property type="match status" value="1"/>
</dbReference>
<dbReference type="Pfam" id="PF11900">
    <property type="entry name" value="DUF3420"/>
    <property type="match status" value="1"/>
</dbReference>
<dbReference type="Pfam" id="PF12313">
    <property type="entry name" value="NPR1_like_C"/>
    <property type="match status" value="1"/>
</dbReference>
<dbReference type="SMART" id="SM00248">
    <property type="entry name" value="ANK"/>
    <property type="match status" value="2"/>
</dbReference>
<dbReference type="SMART" id="SM00225">
    <property type="entry name" value="BTB"/>
    <property type="match status" value="1"/>
</dbReference>
<dbReference type="SUPFAM" id="SSF48403">
    <property type="entry name" value="Ankyrin repeat"/>
    <property type="match status" value="1"/>
</dbReference>
<dbReference type="SUPFAM" id="SSF54695">
    <property type="entry name" value="POZ domain"/>
    <property type="match status" value="1"/>
</dbReference>
<dbReference type="PROSITE" id="PS50297">
    <property type="entry name" value="ANK_REP_REGION"/>
    <property type="match status" value="1"/>
</dbReference>
<dbReference type="PROSITE" id="PS50088">
    <property type="entry name" value="ANK_REPEAT"/>
    <property type="match status" value="1"/>
</dbReference>
<dbReference type="PROSITE" id="PS50097">
    <property type="entry name" value="BTB"/>
    <property type="match status" value="1"/>
</dbReference>
<dbReference type="PROSITE" id="PS52046">
    <property type="entry name" value="ZF_C2HC_NPR"/>
    <property type="match status" value="1"/>
</dbReference>
<organism>
    <name type="scientific">Arabidopsis thaliana</name>
    <name type="common">Mouse-ear cress</name>
    <dbReference type="NCBI Taxonomy" id="3702"/>
    <lineage>
        <taxon>Eukaryota</taxon>
        <taxon>Viridiplantae</taxon>
        <taxon>Streptophyta</taxon>
        <taxon>Embryophyta</taxon>
        <taxon>Tracheophyta</taxon>
        <taxon>Spermatophyta</taxon>
        <taxon>Magnoliopsida</taxon>
        <taxon>eudicotyledons</taxon>
        <taxon>Gunneridae</taxon>
        <taxon>Pentapetalae</taxon>
        <taxon>rosids</taxon>
        <taxon>malvids</taxon>
        <taxon>Brassicales</taxon>
        <taxon>Brassicaceae</taxon>
        <taxon>Camelineae</taxon>
        <taxon>Arabidopsis</taxon>
    </lineage>
</organism>
<keyword id="KW-0002">3D-structure</keyword>
<keyword id="KW-0010">Activator</keyword>
<keyword id="KW-0040">ANK repeat</keyword>
<keyword id="KW-0963">Cytoplasm</keyword>
<keyword id="KW-1015">Disulfide bond</keyword>
<keyword id="KW-0381">Hypersensitive response</keyword>
<keyword id="KW-0479">Metal-binding</keyword>
<keyword id="KW-0539">Nucleus</keyword>
<keyword id="KW-0597">Phosphoprotein</keyword>
<keyword id="KW-0611">Plant defense</keyword>
<keyword id="KW-1185">Reference proteome</keyword>
<keyword id="KW-0677">Repeat</keyword>
<keyword id="KW-0678">Repressor</keyword>
<keyword id="KW-0702">S-nitrosylation</keyword>
<keyword id="KW-0804">Transcription</keyword>
<keyword id="KW-0805">Transcription regulation</keyword>
<keyword id="KW-0832">Ubl conjugation</keyword>
<keyword id="KW-0833">Ubl conjugation pathway</keyword>
<keyword id="KW-0862">Zinc</keyword>
<keyword id="KW-0863">Zinc-finger</keyword>
<name>NPR1_ARATH</name>
<accession>P93002</accession>
<accession>O04742</accession>
<comment type="function">
    <text evidence="1 2 11 12 13 14 15 19 20 21 22 23 24">Salicylic acid (SA)-binding substrate-specific adapter of an E3 ubiquitin-protein ligase complex (CUL3-RBX1-BTB) which mediates the ubiquitination and subsequent proteasomal degradation of target proteins (By similarity). Transcription cofactor that represses gene expression in the absence of salicylic acid (SA), when attached to negative cis-elements (W-box) with WRKY transcription factors (e.g. WRKY70), but stimulates gene expression upon activation by SA, when sumoylated and attached to positive cis-elements (as-1) with TGA transcription factors (e.g. TGA3), thus confering immunity through a series of gene regulations ending in a significant increase in antimicrobial and defense genes expression (e.g. PR-1 and PR-2) (PubMed:26269953, PubMed:35545668). Binds to SA with low capacity; this leads to conformational changes (PubMed:32788727, PubMed:35545668). Key positive regulator of the SA-dependent signaling pathway that negatively regulates jasmonic acid (JA)-dependent signaling pathway. Controls the onset of systemic acquired resistance (SAR). Upon SAR induction, a biphasic change in cellular reduction potential occurs, resulting in reduction of the cytoplasmic oligomeric form to dimeric and monomeric forms, which accumulate in the nucleus and activate gene expression (PubMed:35545668). Appears to control lesion expansion by acting as an inhibitor of programmed cell death (PCD) during effector-triggered immunity (ETI) that occurs in response to incompatible interaction with avirulent pathogenic bacteria (i.e. Pseudomonas syringae ES4326/avrRpt2) ending in a hypersensitive response (HR) (PubMed:22699612). Phosphorylated form is target of proteasome degradation.</text>
</comment>
<comment type="pathway">
    <text evidence="1">Protein modification; protein ubiquitination.</text>
</comment>
<comment type="subunit">
    <text evidence="7 8 10 13 15 19 20 21 22">Homodimer (PubMed:35545668). Oligomer of dimers in an uninduced quiescent state; disulfide-linked (PubMed:35545668). Forms activated (i.e. sumoylated) homodimers and monomers upon systemic acquired resistance (SAR) induction (PubMed:12837250, PubMed:35545668). Interacts with TGA1, TGA3, TGA4, TGA5, TGA6, TGA7 and with reduced forms of TGA1 and TGA4 (PubMed:10659709, PubMed:10662863, PubMed:12953119, PubMed:26269953). Activated homodimer binds two TGA3 dimers in the presence of DNA via its ANK 2 repeat (265-295), thus forming a TGA3(2)-NPR1(2)-TGA3(2) complex in which NPR1 serves as a transcription cofactor by bridging two transcription factor complexes in an enhanceosome (PubMed:26269953, PubMed:35545668). Interacts with NIMIN-1 and NIMIN-3 via its C-terminal region, and with NIMIN-2 via its N-terminal region (PubMed:11442055, PubMed:26269953). Interacts with SUMO3 but not with SUMO1 and SUMO2; this interaction is required for phosphorylation at Ser-11 and Ser-15, and triggers activation by sumoylation and subsequent degradation (PubMed:26269953). Binds to NPR3 and NPR4; these interactions are promoted by association of salicylic acid (SA) with NPR3, but disrupted by SA association with NPR4, probably due to conformational changes (PubMed:22699612, PubMed:26269953, PubMed:32788727). Binds to CUL3A, a core component of the cullin-RING ubiquitin ligases (CRL); this interaction requires NPR3 and NPR4 (PubMed:22699612, PubMed:35545668). Interacts with NPR2 independently of SA (PubMed:22699612). Binds to WRKY70 when unmodified (i.e. not sumoylated) (PubMed:26269953).</text>
</comment>
<comment type="interaction">
    <interactant intactId="EBI-1392127">
        <id>P93002</id>
    </interactant>
    <interactant intactId="EBI-531362">
        <id>Q9ZVH4</id>
        <label>CUL3A</label>
    </interactant>
    <organismsDiffer>false</organismsDiffer>
    <experiments>3</experiments>
</comment>
<comment type="interaction">
    <interactant intactId="EBI-1392127">
        <id>P93002</id>
    </interactant>
    <interactant intactId="EBI-25518065">
        <id>Q9FMI5</id>
        <label>MHJ24.13</label>
    </interactant>
    <organismsDiffer>false</organismsDiffer>
    <experiments>3</experiments>
</comment>
<comment type="interaction">
    <interactant intactId="EBI-1392127">
        <id>P93002</id>
    </interactant>
    <interactant intactId="EBI-541099">
        <id>Q9FNZ5</id>
        <label>NIMIN-1</label>
    </interactant>
    <organismsDiffer>false</organismsDiffer>
    <experiments>4</experiments>
</comment>
<comment type="interaction">
    <interactant intactId="EBI-1392127">
        <id>P93002</id>
    </interactant>
    <interactant intactId="EBI-541107">
        <id>Q9LUA3</id>
        <label>NIMIN-2</label>
    </interactant>
    <organismsDiffer>false</organismsDiffer>
    <experiments>5</experiments>
</comment>
<comment type="interaction">
    <interactant intactId="EBI-1392127">
        <id>P93002</id>
    </interactant>
    <interactant intactId="EBI-541115">
        <id>Q9FNZ4</id>
        <label>NIMIN-3</label>
    </interactant>
    <organismsDiffer>false</organismsDiffer>
    <experiments>5</experiments>
</comment>
<comment type="interaction">
    <interactant intactId="EBI-1392127">
        <id>P93002</id>
    </interactant>
    <interactant intactId="EBI-15987489">
        <id>Q9SZI3</id>
        <label>NPR2</label>
    </interactant>
    <organismsDiffer>false</organismsDiffer>
    <experiments>2</experiments>
</comment>
<comment type="interaction">
    <interactant intactId="EBI-1392127">
        <id>P93002</id>
    </interactant>
    <interactant intactId="EBI-4441365">
        <id>Q8L746</id>
        <label>NPR3</label>
    </interactant>
    <organismsDiffer>false</organismsDiffer>
    <experiments>2</experiments>
</comment>
<comment type="interaction">
    <interactant intactId="EBI-1392127">
        <id>P93002</id>
    </interactant>
    <interactant intactId="EBI-1392093">
        <id>Q5ICL9</id>
        <label>NPR4</label>
    </interactant>
    <organismsDiffer>false</organismsDiffer>
    <experiments>3</experiments>
</comment>
<comment type="interaction">
    <interactant intactId="EBI-1392127">
        <id>P93002</id>
    </interactant>
    <interactant intactId="EBI-4470690">
        <id>Q93ZX1</id>
        <label>RFC4</label>
    </interactant>
    <organismsDiffer>false</organismsDiffer>
    <experiments>3</experiments>
</comment>
<comment type="interaction">
    <interactant intactId="EBI-1392127">
        <id>P93002</id>
    </interactant>
    <interactant intactId="EBI-541351">
        <id>Q39237</id>
        <label>TGA1</label>
    </interactant>
    <organismsDiffer>false</organismsDiffer>
    <experiments>7</experiments>
</comment>
<comment type="interaction">
    <interactant intactId="EBI-1392127">
        <id>P93002</id>
    </interactant>
    <interactant intactId="EBI-541307">
        <id>P43273</id>
        <label>TGA2</label>
    </interactant>
    <organismsDiffer>false</organismsDiffer>
    <experiments>12</experiments>
</comment>
<comment type="interaction">
    <interactant intactId="EBI-1392127">
        <id>P93002</id>
    </interactant>
    <interactant intactId="EBI-541366">
        <id>Q39234</id>
        <label>TGA3</label>
    </interactant>
    <organismsDiffer>false</organismsDiffer>
    <experiments>9</experiments>
</comment>
<comment type="interaction">
    <interactant intactId="EBI-1392127">
        <id>P93002</id>
    </interactant>
    <interactant intactId="EBI-541381">
        <id>Q39163</id>
        <label>TGA5</label>
    </interactant>
    <organismsDiffer>false</organismsDiffer>
    <experiments>8</experiments>
</comment>
<comment type="interaction">
    <interactant intactId="EBI-1392127">
        <id>P93002</id>
    </interactant>
    <interactant intactId="EBI-541321">
        <id>Q39140</id>
        <label>TGA6</label>
    </interactant>
    <organismsDiffer>false</organismsDiffer>
    <experiments>5</experiments>
</comment>
<comment type="subcellular location">
    <subcellularLocation>
        <location evidence="8 9 13 20">Cytoplasm</location>
    </subcellularLocation>
    <subcellularLocation>
        <location evidence="8 9 13 20">Nucleus</location>
    </subcellularLocation>
    <subcellularLocation>
        <location evidence="20">Nucleus</location>
        <location evidence="20">Nuclear body</location>
    </subcellularLocation>
    <text evidence="8 9 13 20">Accumulation in nucleus after induction by salicylic acid (SA) treatment or after pathogen infection (PubMed:10662863, PubMed:11148282, PubMed:12837250). Accumulates in nuclear bodies when sumoylated (PubMed:26269953).</text>
</comment>
<comment type="induction">
    <text evidence="19">By salicylic acid (SA), benzol(1,2,3)thiadiazole-7-carbothioic acid S-methyl ester (BTH) and 2,6-dichloroisonicotinic acid (INA). During the hypersensitive response (HR) following infection with the avirulent Pseudomonas syringae strain ES4326/avrRpt2, programmed cell death (PCD) subsequent to effector-triggered immunity (ETI) results in NPR1 degradation at the site of infection, but is accompanied by NPR1 accumulation in cells surrounding the HR lesion (PubMed:22699612).</text>
</comment>
<comment type="domain">
    <text evidence="16">The BTB/POZ domain mediates the interaction with some component of ubiquitin ligase complexes.</text>
</comment>
<comment type="PTM">
    <text evidence="20">Phosphorylation at Ser-55 and Ser-59 prevents sumoylation to ensure stability and quiescence.</text>
</comment>
<comment type="PTM">
    <text evidence="18 20">Phosphorylated at Ser-11 and Ser-15 in the nucleus; facilitates its recruitment to a cullin3-based ubiquitin ligase leading to polyubiquitination and subsequent CUL3/CSN-mediated degradation (PubMed:19490895). This phosphorylation at Ser-11 and Ser-15 requires interaction with SUMO3, and promotes in turn activation by sumoylation and subsequent degradation (PubMed:26269953).</text>
</comment>
<comment type="PTM">
    <text evidence="18">Ubiquitinated.</text>
</comment>
<comment type="PTM">
    <text evidence="20">Sumoylated by SUMO3 independently of an E3 ligase to activate defense gene expression by switching from association with WRKY transcriptional repressors (e.g. WRKY70) to TGA transcriptional activators (e.g. TGA3) (PubMed:26269953). Sumoylation is inhibited by phosphorylation at Ser-55 and Ser-59, but seems to promote phosphorylation at Ser-11 and Ser-15 (PubMed:26269953). Sumoylation also triggers degradation, making immune induction transient (PubMed:26269953).</text>
</comment>
<comment type="PTM">
    <text>The Cys-82-SH group reacts with Cys-216-SH of the other subunit to form an intermolecular disulfide. This disulfide might subsequently be reduced upon systemic acquired resistance (SAR) induction.</text>
</comment>
<comment type="PTM">
    <text evidence="17">S-nitrosylation at Cys-156 facilitates its oligomerization.</text>
</comment>
<comment type="similarity">
    <text evidence="29">Belongs to the plant 'ANKYRIN-BTB/POZ' family. 'NPR1-like' subfamily.</text>
</comment>
<feature type="chain" id="PRO_0000067063" description="Regulatory protein NPR1">
    <location>
        <begin position="1"/>
        <end position="593"/>
    </location>
</feature>
<feature type="domain" description="BTB" evidence="4">
    <location>
        <begin position="65"/>
        <end position="144"/>
    </location>
</feature>
<feature type="repeat" description="ANK 1" evidence="3">
    <location>
        <begin position="229"/>
        <end position="258"/>
    </location>
</feature>
<feature type="repeat" description="ANK 2" evidence="3">
    <location>
        <begin position="265"/>
        <end position="295"/>
    </location>
</feature>
<feature type="repeat" description="ANK 3" evidence="3">
    <location>
        <begin position="297"/>
        <end position="324"/>
    </location>
</feature>
<feature type="repeat" description="ANK 4" evidence="3">
    <location>
        <begin position="328"/>
        <end position="357"/>
    </location>
</feature>
<feature type="repeat" description="ANK 5" evidence="3">
    <location>
        <begin position="361"/>
        <end position="397"/>
    </location>
</feature>
<feature type="zinc finger region" description="C2HC NPR-type" evidence="5">
    <location>
        <begin position="147"/>
        <end position="161"/>
    </location>
</feature>
<feature type="region of interest" description="Salicylic acid-binding core (SBC)" evidence="2">
    <location>
        <begin position="387"/>
        <end position="525"/>
    </location>
</feature>
<feature type="region of interest" description="Disordered" evidence="6">
    <location>
        <begin position="563"/>
        <end position="593"/>
    </location>
</feature>
<feature type="short sequence motif" description="SIM3, required fo binding to SUMO3 and subsequent sumoylation" evidence="20">
    <location>
        <begin position="345"/>
        <end position="348"/>
    </location>
</feature>
<feature type="short sequence motif" description="Nuclear localization signal" evidence="3">
    <location>
        <begin position="537"/>
        <end position="554"/>
    </location>
</feature>
<feature type="compositionally biased region" description="Low complexity" evidence="6">
    <location>
        <begin position="566"/>
        <end position="579"/>
    </location>
</feature>
<feature type="compositionally biased region" description="Basic residues" evidence="6">
    <location>
        <begin position="583"/>
        <end position="593"/>
    </location>
</feature>
<feature type="binding site" evidence="5 22 33">
    <location>
        <position position="150"/>
    </location>
    <ligand>
        <name>Zn(2+)</name>
        <dbReference type="ChEBI" id="CHEBI:29105"/>
    </ligand>
</feature>
<feature type="binding site" evidence="5 22 33">
    <location>
        <position position="155"/>
    </location>
    <ligand>
        <name>Zn(2+)</name>
        <dbReference type="ChEBI" id="CHEBI:29105"/>
    </ligand>
</feature>
<feature type="binding site" evidence="5 22 33">
    <location>
        <position position="157"/>
    </location>
    <ligand>
        <name>Zn(2+)</name>
        <dbReference type="ChEBI" id="CHEBI:29105"/>
    </ligand>
</feature>
<feature type="binding site" evidence="5 22 33">
    <location>
        <position position="160"/>
    </location>
    <ligand>
        <name>Zn(2+)</name>
        <dbReference type="ChEBI" id="CHEBI:29105"/>
    </ligand>
</feature>
<feature type="binding site" evidence="2">
    <location>
        <position position="432"/>
    </location>
    <ligand>
        <name>salicylate</name>
        <dbReference type="ChEBI" id="CHEBI:30762"/>
    </ligand>
</feature>
<feature type="modified residue" description="Phosphoserine" evidence="18">
    <location>
        <position position="11"/>
    </location>
</feature>
<feature type="modified residue" description="Phosphoserine" evidence="18">
    <location>
        <position position="15"/>
    </location>
</feature>
<feature type="modified residue" description="Phosphoserine" evidence="20">
    <location>
        <position position="55"/>
    </location>
</feature>
<feature type="modified residue" description="Phosphoserine" evidence="20">
    <location>
        <position position="59"/>
    </location>
</feature>
<feature type="modified residue" description="S-nitrosocysteine" evidence="5 17">
    <location>
        <position position="156"/>
    </location>
</feature>
<feature type="disulfide bond" description="Interchain (with C-216); in linked form">
    <location>
        <position position="82"/>
    </location>
</feature>
<feature type="disulfide bond" description="Interchain (with C-82); in linked form">
    <location>
        <position position="216"/>
    </location>
</feature>
<feature type="sequence variant" description="In strain: cv. Wassilewskija." evidence="25">
    <original>S</original>
    <variation>N</variation>
    <location>
        <position position="93"/>
    </location>
</feature>
<feature type="sequence variant" description="In strain: cv. Wassilewskija." evidence="25">
    <original>A</original>
    <variation>T</variation>
    <location>
        <position position="96"/>
    </location>
</feature>
<feature type="sequence variant" description="In strain: cv. Wassilewskija." evidence="25">
    <location>
        <position position="108"/>
    </location>
</feature>
<feature type="sequence variant" description="In strain: cv. Wassilewskija." evidence="25">
    <original>S</original>
    <variation>W</variation>
    <location>
        <position position="268"/>
    </location>
</feature>
<feature type="sequence variant" description="In strain: cv. Wassilewskija." evidence="25">
    <original>Q</original>
    <variation>P</variation>
    <location>
        <position position="406"/>
    </location>
</feature>
<feature type="mutagenesis site" description="Loss of ubiquitination and degradation, but normal interaction with SUMO3 and subsequent sumoylation associated with its localization to nuclear bodies; when associated with A-15." evidence="18 20">
    <original>S</original>
    <variation>A</variation>
    <location>
        <position position="11"/>
    </location>
</feature>
<feature type="mutagenesis site" description="Phosphomimic. Enhanced interaction with SUMO3, and altered subsequent sumoylation and degradation associated with its localization to nuclear bodies, as well as increased salicylic acid (SA)-dependent interactions with NPR3 and NPR4; when associated with D-15. Blocked SA-dependent interactions with NPR3 and NPR4; when associated with D-15 and D-346." evidence="20">
    <original>S</original>
    <variation>D</variation>
    <location>
        <position position="11"/>
    </location>
</feature>
<feature type="mutagenesis site" description="Loss of ubiquitination and degradation, but normal interaction with SUMO3 and subsequent sumoylation associated with its localization to nuclear bodies; when associated with A-11." evidence="18 20">
    <original>S</original>
    <variation>A</variation>
    <location>
        <position position="15"/>
    </location>
</feature>
<feature type="mutagenesis site" description="Phosphomimic. Enhanced interaction with SUMO3, and promoted subsequent sumoylation and degradation associated with its localization to nuclear bodies, as well as increased salicylic acid (SA)-dependent interactions with NPR3 and NPR4; when associated with D-11. Blocked SA-dependent interactions with NPR3 and NPR4; when associated with D-11 and D-346." evidence="20">
    <original>S</original>
    <variation>D</variation>
    <location>
        <position position="15"/>
    </location>
</feature>
<feature type="mutagenesis site" description="In dim; impaired dimerization and oligomerization leading to increased nuclear accumulation, but lost ability to activate as-1 elements-containing gene promoters (e.g. NPR1, WRKY18, WRKY38 and WRKY62) with, as a consequence, a compromised salicylic acid (SA)-induced defense against Pseudomonas syringae pv. maculicola ES4326; when associated with D-53; D-56 and K-83." evidence="22">
    <original>L</original>
    <variation>D</variation>
    <location>
        <position position="49"/>
    </location>
</feature>
<feature type="mutagenesis site" description="In dim; impaired dimerization and oligomerization leading to increased nuclear accumulation, but lost ability to activate as-1 elements-containing gene promoters (e.g. NPR1, WRKY18, WRKY38 and WRKY62) with, as a consequence, a compromised salicylic acid (SA)-induced defense against Pseudomonas syringae pv. maculicola ES4326; when associated with D-49; D-56 and K-83." evidence="22">
    <original>F</original>
    <variation>D</variation>
    <location>
        <position position="53"/>
    </location>
</feature>
<feature type="mutagenesis site" description="Normal binding to SUMO3 and subsequent sumoylation associated with its localization to nuclear bodies and elevated levels of defense genes expression (e.g. PR1 and PR2) leading to severely retarded plant growth; when associated with A-59." evidence="20">
    <original>S</original>
    <variation>A</variation>
    <location>
        <position position="55"/>
    </location>
</feature>
<feature type="mutagenesis site" description="Phosphomimic. Reduced SUMO3-mediated sumoylation preventing nuclear body localization, as well as reduced salicylic acid (SA)-dependent interactions with NPR3 and NPR4, impaired ability to bind TGA3 but increased interaction with WRKY70 leading to altered regulation of defense gene transcription and increased susceptibility to pathogenic bacteria (e.g. Pseudomonas syringae pv. maculicola ES4326); when associated with D-59." evidence="20">
    <original>S</original>
    <variation>D</variation>
    <location>
        <position position="55"/>
    </location>
</feature>
<feature type="mutagenesis site" description="In dim; impaired dimerization and oligomerization leading to increased nuclear accumulation, but lost ability to activate as-1 elements-containing gene promoters (e.g. NPR1, WRKY18, WRKY38 and WRKY62) with, as a consequence, a compromised salicylic acid (SA)-induced defense against Pseudomonas syringae pv. maculicola ES4326; when associated with D-49; D-53 and K-83." evidence="22">
    <original>V</original>
    <variation>D</variation>
    <location>
        <position position="56"/>
    </location>
</feature>
<feature type="mutagenesis site" description="Normal binding to SUMO3 and subsequent sumoylation associated with its localization to nuclear bodies and elevated levels of defense genes expression (e.g. PR1 and PR2) leading to severely retarded plant growth; when associated with A-55." evidence="20">
    <original>S</original>
    <variation>A</variation>
    <location>
        <position position="59"/>
    </location>
</feature>
<feature type="mutagenesis site" description="Phosphomimic. Reduced SUMO3-mediated sumoylation preventing nuclear body localization, as well as reduced salicylic acid (SA)-dependent interactions with NPR3 and NPR4, impaired ability to bind TGA3 but increased interaction with WRKY70 leading to altered regulation of defense gene transcription and increased susceptibility to pathogenic bacteria (e.g. Pseudomonas syringae pv. maculicola ES4326); when associated with D-55." evidence="20">
    <original>S</original>
    <variation>D</variation>
    <location>
        <position position="59"/>
    </location>
</feature>
<feature type="mutagenesis site" description="Prevents oligomerization but not homodimerization and leads to nuclear localization. Constitutive PR1 gene expression conferring constitutive resistance to Pseudomonas syringae pv. maculicola ES4326." evidence="13 19 22">
    <original>C</original>
    <variation>A</variation>
    <location>
        <position position="82"/>
    </location>
</feature>
<feature type="mutagenesis site" description="In dim; impaired dimerization and oligomerization leading to increased nuclear accumulation, but lost ability to activate as-1 elements-containing gene promoters (e.g. NPR1, WRKY18, WRKY38 and WRKY62) with, as a consequence, a compromised salicylic acid (SA)-induced defense against Pseudomonas syringae pv. maculicola ES4326; when associated with D-49; D-53 and D-56." evidence="22">
    <original>V</original>
    <variation>K</variation>
    <location>
        <position position="83"/>
    </location>
</feature>
<feature type="mutagenesis site" description="Defective interaction with TGA factors (e.g. TGA3) and consequent disruption of transcriptional regulatory activity." evidence="22">
    <original>C</original>
    <variation>A</variation>
    <location>
        <position position="150"/>
    </location>
</feature>
<feature type="mutagenesis site" description="In npr1-2; loss of SAR induction, loss of expression of PR genes and increased susceptibility to infections. Defective interaction with TGA factors (e.g. TGA3) and consequent disruption of transcriptional regulatory activity." evidence="22 24">
    <original>C</original>
    <variation>Y</variation>
    <location>
        <position position="150"/>
    </location>
</feature>
<feature type="mutagenesis site" description="Defective interaction with TGA factors (e.g. TGA3) and consequent disruption of transcriptional regulatory activity." evidence="22">
    <original>AD</original>
    <variation>PR</variation>
    <location>
        <begin position="151"/>
        <end position="152"/>
    </location>
</feature>
<feature type="mutagenesis site" description="Defective interaction with TGA factors (e.g. TGA3) and consequent disruption of transcriptional regulatory activity." evidence="22">
    <original>C</original>
    <variation>A</variation>
    <location>
        <position position="155"/>
    </location>
</feature>
<feature type="mutagenesis site" description="In npr1-35; defective interaction with TGA factors (e.g. TGA3) and consequent disruption of transcriptional regulatory activity." evidence="22">
    <original>C</original>
    <variation>Y</variation>
    <location>
        <position position="155"/>
    </location>
</feature>
<feature type="mutagenesis site" description="Impaired dimerization. Abolishes S-nitrosylation and oligomerization." evidence="22">
    <original>C</original>
    <variation>A</variation>
    <location>
        <position position="156"/>
    </location>
</feature>
<feature type="mutagenesis site" description="Conserved ability to interact with TGA factors (e.g. TGA3) to promote their transcriptional regulatory activity." evidence="22">
    <original>H</original>
    <variation>A</variation>
    <location>
        <position position="157"/>
    </location>
</feature>
<feature type="mutagenesis site" description="Defective interaction with TGA factors (e.g. TGA3) and consequent disruption of transcriptional regulatory activity." evidence="22">
    <original>C</original>
    <variation>A</variation>
    <location>
        <position position="160"/>
    </location>
</feature>
<feature type="mutagenesis site" description="Prevents oligomerization and leads to the nuclear localization." evidence="13">
    <original>C</original>
    <variation>A</variation>
    <location>
        <position position="216"/>
    </location>
</feature>
<feature type="mutagenesis site" description="Abolished interaction with TGA3 and consequent disruption of salicylic acid (SA)-induced PR1 gene expression." evidence="22">
    <original>L</original>
    <variation>D</variation>
    <location>
        <position position="281"/>
    </location>
</feature>
<feature type="mutagenesis site" description="Abolished interaction with TGA3 and consequent disruption of salicylic acid (SA)-induced PR1 gene expression." evidence="22">
    <original>L</original>
    <variation>D</variation>
    <location>
        <position position="284"/>
    </location>
</feature>
<feature type="mutagenesis site" description="In nim1-2; no induction of SAR genes expression or disease resistance." evidence="25">
    <original>H</original>
    <variation>Y</variation>
    <location>
        <position position="300"/>
    </location>
</feature>
<feature type="mutagenesis site" description="In npr1-1; loss of SAR induction, loss of expression of PR genes and increased susceptibility to infections. Impaired interaction with TGA3." evidence="22 24">
    <original>H</original>
    <variation>Y</variation>
    <location>
        <position position="334"/>
    </location>
</feature>
<feature type="mutagenesis site" description="In sim3; impaired interaction with SUMO3, and altered subsequent sumoylation leading to the loss of transcription regulation activity. Reduced salicylic acid (SA)-dependent interactions with NPR3 and NPR4. Present in both nucleus and cytoplasm, but not in nuclear bodies. Reduced salicylic acid (SA)-induced PR1 and PR2 gene expression leading to impaired SA-induced resistance against pathogenic bacteria (e.g. Pseudomonas syringae pv. maculicola ES4326). Impaired ability to bind to TGA3 but enhanced interaction with WRKY70. Blocked SA-dependent interactions with NPR3 and NPR4; when associated with D-11 and D-15." evidence="20 22">
    <original>L</original>
    <variation>D</variation>
    <location>
        <position position="346"/>
    </location>
</feature>
<feature type="mutagenesis site" description="Reduced salicylic acid (SA)-induced PR1 gene expression but maintained interaction with TGA3." evidence="22">
    <original>L</original>
    <variation>D</variation>
    <location>
        <position position="393"/>
    </location>
</feature>
<feature type="mutagenesis site" description="Reduced salicylic acid (SA)-induced PR1 gene expression and impaired interaction with TGA3." evidence="22">
    <original>I</original>
    <variation>D</variation>
    <location>
        <position position="397"/>
    </location>
</feature>
<feature type="mutagenesis site" description="In nim1-4 and nim1-5; no induction of SAR genes expression or disease resistance." evidence="25">
    <original>R</original>
    <variation>K</variation>
    <location>
        <position position="432"/>
    </location>
</feature>
<feature type="helix" evidence="36">
    <location>
        <begin position="43"/>
        <end position="58"/>
    </location>
</feature>
<feature type="helix" evidence="36">
    <location>
        <begin position="60"/>
        <end position="63"/>
    </location>
</feature>
<feature type="strand" evidence="36">
    <location>
        <begin position="67"/>
        <end position="70"/>
    </location>
</feature>
<feature type="strand" evidence="36">
    <location>
        <begin position="72"/>
        <end position="74"/>
    </location>
</feature>
<feature type="strand" evidence="36">
    <location>
        <begin position="76"/>
        <end position="79"/>
    </location>
</feature>
<feature type="helix" evidence="36">
    <location>
        <begin position="81"/>
        <end position="87"/>
    </location>
</feature>
<feature type="helix" evidence="36">
    <location>
        <begin position="89"/>
        <end position="98"/>
    </location>
</feature>
<feature type="helix" evidence="36">
    <location>
        <begin position="99"/>
        <end position="101"/>
    </location>
</feature>
<feature type="strand" evidence="36">
    <location>
        <begin position="111"/>
        <end position="113"/>
    </location>
</feature>
<feature type="helix" evidence="36">
    <location>
        <begin position="114"/>
        <end position="117"/>
    </location>
</feature>
<feature type="helix" evidence="36">
    <location>
        <begin position="125"/>
        <end position="137"/>
    </location>
</feature>
<feature type="turn" evidence="36">
    <location>
        <begin position="145"/>
        <end position="147"/>
    </location>
</feature>
<feature type="strand" evidence="36">
    <location>
        <begin position="157"/>
        <end position="160"/>
    </location>
</feature>
<feature type="helix" evidence="36">
    <location>
        <begin position="161"/>
        <end position="176"/>
    </location>
</feature>
<feature type="helix" evidence="36">
    <location>
        <begin position="180"/>
        <end position="193"/>
    </location>
</feature>
<feature type="turn" evidence="36">
    <location>
        <begin position="194"/>
        <end position="196"/>
    </location>
</feature>
<feature type="helix" evidence="36">
    <location>
        <begin position="199"/>
        <end position="211"/>
    </location>
</feature>
<feature type="helix" evidence="36">
    <location>
        <begin position="213"/>
        <end position="216"/>
    </location>
</feature>
<feature type="helix" evidence="36">
    <location>
        <begin position="217"/>
        <end position="229"/>
    </location>
</feature>
<feature type="helix" evidence="36">
    <location>
        <begin position="234"/>
        <end position="240"/>
    </location>
</feature>
<feature type="helix" evidence="36">
    <location>
        <begin position="243"/>
        <end position="255"/>
    </location>
</feature>
<feature type="helix" evidence="36">
    <location>
        <begin position="265"/>
        <end position="275"/>
    </location>
</feature>
<feature type="helix" evidence="36">
    <location>
        <begin position="279"/>
        <end position="287"/>
    </location>
</feature>
<feature type="helix" evidence="36">
    <location>
        <begin position="293"/>
        <end position="296"/>
    </location>
</feature>
<feature type="helix" evidence="36">
    <location>
        <begin position="298"/>
        <end position="304"/>
    </location>
</feature>
<feature type="helix" evidence="36">
    <location>
        <begin position="308"/>
        <end position="315"/>
    </location>
</feature>
<feature type="helix" evidence="36">
    <location>
        <begin position="332"/>
        <end position="339"/>
    </location>
</feature>
<feature type="helix" evidence="36">
    <location>
        <begin position="342"/>
        <end position="349"/>
    </location>
</feature>
<feature type="turn" evidence="36">
    <location>
        <begin position="350"/>
        <end position="352"/>
    </location>
</feature>
<feature type="helix" evidence="36">
    <location>
        <begin position="365"/>
        <end position="372"/>
    </location>
</feature>
<feature type="helix" evidence="36">
    <location>
        <begin position="375"/>
        <end position="378"/>
    </location>
</feature>
<feature type="helix" evidence="36">
    <location>
        <begin position="390"/>
        <end position="403"/>
    </location>
</feature>
<evidence type="ECO:0000250" key="1">
    <source>
        <dbReference type="UniProtKB" id="O22286"/>
    </source>
</evidence>
<evidence type="ECO:0000250" key="2">
    <source>
        <dbReference type="UniProtKB" id="Q5ICL9"/>
    </source>
</evidence>
<evidence type="ECO:0000255" key="3"/>
<evidence type="ECO:0000255" key="4">
    <source>
        <dbReference type="PROSITE-ProRule" id="PRU00037"/>
    </source>
</evidence>
<evidence type="ECO:0000255" key="5">
    <source>
        <dbReference type="PROSITE-ProRule" id="PRU01391"/>
    </source>
</evidence>
<evidence type="ECO:0000256" key="6">
    <source>
        <dbReference type="SAM" id="MobiDB-lite"/>
    </source>
</evidence>
<evidence type="ECO:0000269" key="7">
    <source>
    </source>
</evidence>
<evidence type="ECO:0000269" key="8">
    <source>
    </source>
</evidence>
<evidence type="ECO:0000269" key="9">
    <source>
    </source>
</evidence>
<evidence type="ECO:0000269" key="10">
    <source>
    </source>
</evidence>
<evidence type="ECO:0000269" key="11">
    <source>
    </source>
</evidence>
<evidence type="ECO:0000269" key="12">
    <source>
    </source>
</evidence>
<evidence type="ECO:0000269" key="13">
    <source>
    </source>
</evidence>
<evidence type="ECO:0000269" key="14">
    <source>
    </source>
</evidence>
<evidence type="ECO:0000269" key="15">
    <source>
    </source>
</evidence>
<evidence type="ECO:0000269" key="16">
    <source>
    </source>
</evidence>
<evidence type="ECO:0000269" key="17">
    <source>
    </source>
</evidence>
<evidence type="ECO:0000269" key="18">
    <source>
    </source>
</evidence>
<evidence type="ECO:0000269" key="19">
    <source>
    </source>
</evidence>
<evidence type="ECO:0000269" key="20">
    <source>
    </source>
</evidence>
<evidence type="ECO:0000269" key="21">
    <source>
    </source>
</evidence>
<evidence type="ECO:0000269" key="22">
    <source>
    </source>
</evidence>
<evidence type="ECO:0000269" key="23">
    <source>
    </source>
</evidence>
<evidence type="ECO:0000269" key="24">
    <source>
    </source>
</evidence>
<evidence type="ECO:0000269" key="25">
    <source>
    </source>
</evidence>
<evidence type="ECO:0000303" key="26">
    <source>
    </source>
</evidence>
<evidence type="ECO:0000303" key="27">
    <source>
    </source>
</evidence>
<evidence type="ECO:0000303" key="28">
    <source>
    </source>
</evidence>
<evidence type="ECO:0000305" key="29"/>
<evidence type="ECO:0000312" key="30">
    <source>
        <dbReference type="Araport" id="AT1G64280"/>
    </source>
</evidence>
<evidence type="ECO:0000312" key="31">
    <source>
        <dbReference type="EMBL" id="AAG51705.1"/>
    </source>
</evidence>
<evidence type="ECO:0007744" key="32">
    <source>
        <dbReference type="PDB" id="7MK2"/>
    </source>
</evidence>
<evidence type="ECO:0007744" key="33">
    <source>
        <dbReference type="PDB" id="7MK3"/>
    </source>
</evidence>
<evidence type="ECO:0007744" key="34">
    <source>
        <dbReference type="PDB" id="7TAC"/>
    </source>
</evidence>
<evidence type="ECO:0007744" key="35">
    <source>
        <dbReference type="PDB" id="7TAD"/>
    </source>
</evidence>
<evidence type="ECO:0007829" key="36">
    <source>
        <dbReference type="PDB" id="7MK3"/>
    </source>
</evidence>
<gene>
    <name evidence="27" type="primary">NPR1</name>
    <name evidence="28" type="synonym">NIM1</name>
    <name evidence="26" type="synonym">SAI1</name>
    <name evidence="30" type="ordered locus">At1g64280</name>
    <name evidence="31" type="ORF">F15H21.6</name>
</gene>